<sequence>MTAVSLGIPAVPPPPLAPRRASRQIMVGSVPVGGGAPVSVQSMTTTLTADVNATLQQIAELTAAGCQIVRVAVPSQDDVAALPAIARKSQLPVIADIHFQPRYVFAAIEAGCAAVRVNPGNIRQFDDKVKEIAKAAGDAGVPIRIGVNAGSLDKRLLAKHGKATAEALVESALWECSLFEEHGFRDIKISVKHNDPVVMVRAYRQLAEACDYPLHLGVTEAGPAFQGTIKSSVAFGALLAEGIGDTIRVSLSAPPVEEIKVGAAILESLGLRERGLEIVSCPSCGRAQVDVYKLAEEVTAGLEGLPVPLRVAVMGCVVNGPGEAREADLGVASGNGKGQIFVKGQVIKTVPEGQIVETLIEEALRLAEEMGAELPEELRSLAGGATVTVH</sequence>
<name>ISPG_SALTO</name>
<reference key="1">
    <citation type="journal article" date="2007" name="Proc. Natl. Acad. Sci. U.S.A.">
        <title>Genome sequencing reveals complex secondary metabolome in the marine actinomycete Salinispora tropica.</title>
        <authorList>
            <person name="Udwary D.W."/>
            <person name="Zeigler L."/>
            <person name="Asolkar R.N."/>
            <person name="Singan V."/>
            <person name="Lapidus A."/>
            <person name="Fenical W."/>
            <person name="Jensen P.R."/>
            <person name="Moore B.S."/>
        </authorList>
    </citation>
    <scope>NUCLEOTIDE SEQUENCE [LARGE SCALE GENOMIC DNA]</scope>
    <source>
        <strain>ATCC BAA-916 / DSM 44818 / JCM 13857 / NBRC 105044 / CNB-440</strain>
    </source>
</reference>
<feature type="chain" id="PRO_1000076898" description="4-hydroxy-3-methylbut-2-en-1-yl diphosphate synthase (flavodoxin)">
    <location>
        <begin position="1"/>
        <end position="390"/>
    </location>
</feature>
<feature type="binding site" evidence="1">
    <location>
        <position position="281"/>
    </location>
    <ligand>
        <name>[4Fe-4S] cluster</name>
        <dbReference type="ChEBI" id="CHEBI:49883"/>
    </ligand>
</feature>
<feature type="binding site" evidence="1">
    <location>
        <position position="284"/>
    </location>
    <ligand>
        <name>[4Fe-4S] cluster</name>
        <dbReference type="ChEBI" id="CHEBI:49883"/>
    </ligand>
</feature>
<feature type="binding site" evidence="1">
    <location>
        <position position="316"/>
    </location>
    <ligand>
        <name>[4Fe-4S] cluster</name>
        <dbReference type="ChEBI" id="CHEBI:49883"/>
    </ligand>
</feature>
<feature type="binding site" evidence="1">
    <location>
        <position position="323"/>
    </location>
    <ligand>
        <name>[4Fe-4S] cluster</name>
        <dbReference type="ChEBI" id="CHEBI:49883"/>
    </ligand>
</feature>
<dbReference type="EC" id="1.17.7.3" evidence="1"/>
<dbReference type="EMBL" id="CP000667">
    <property type="protein sequence ID" value="ABP53819.1"/>
    <property type="molecule type" value="Genomic_DNA"/>
</dbReference>
<dbReference type="RefSeq" id="WP_011905251.1">
    <property type="nucleotide sequence ID" value="NC_009380.1"/>
</dbReference>
<dbReference type="SMR" id="A4X4L9"/>
<dbReference type="STRING" id="369723.Strop_1352"/>
<dbReference type="KEGG" id="stp:Strop_1352"/>
<dbReference type="PATRIC" id="fig|369723.5.peg.1378"/>
<dbReference type="eggNOG" id="COG0821">
    <property type="taxonomic scope" value="Bacteria"/>
</dbReference>
<dbReference type="HOGENOM" id="CLU_042258_0_0_11"/>
<dbReference type="UniPathway" id="UPA00056">
    <property type="reaction ID" value="UER00096"/>
</dbReference>
<dbReference type="Proteomes" id="UP000000235">
    <property type="component" value="Chromosome"/>
</dbReference>
<dbReference type="GO" id="GO:0051539">
    <property type="term" value="F:4 iron, 4 sulfur cluster binding"/>
    <property type="evidence" value="ECO:0007669"/>
    <property type="project" value="UniProtKB-UniRule"/>
</dbReference>
<dbReference type="GO" id="GO:0046429">
    <property type="term" value="F:4-hydroxy-3-methylbut-2-en-1-yl diphosphate synthase activity (ferredoxin)"/>
    <property type="evidence" value="ECO:0007669"/>
    <property type="project" value="UniProtKB-UniRule"/>
</dbReference>
<dbReference type="GO" id="GO:0141197">
    <property type="term" value="F:4-hydroxy-3-methylbut-2-enyl-diphosphate synthase activity (flavodoxin)"/>
    <property type="evidence" value="ECO:0007669"/>
    <property type="project" value="UniProtKB-EC"/>
</dbReference>
<dbReference type="GO" id="GO:0005506">
    <property type="term" value="F:iron ion binding"/>
    <property type="evidence" value="ECO:0007669"/>
    <property type="project" value="InterPro"/>
</dbReference>
<dbReference type="GO" id="GO:0019288">
    <property type="term" value="P:isopentenyl diphosphate biosynthetic process, methylerythritol 4-phosphate pathway"/>
    <property type="evidence" value="ECO:0007669"/>
    <property type="project" value="UniProtKB-UniRule"/>
</dbReference>
<dbReference type="GO" id="GO:0016114">
    <property type="term" value="P:terpenoid biosynthetic process"/>
    <property type="evidence" value="ECO:0007669"/>
    <property type="project" value="InterPro"/>
</dbReference>
<dbReference type="CDD" id="cd00945">
    <property type="entry name" value="Aldolase_Class_I"/>
    <property type="match status" value="1"/>
</dbReference>
<dbReference type="FunFam" id="3.20.20.20:FF:000001">
    <property type="entry name" value="4-hydroxy-3-methylbut-2-en-1-yl diphosphate synthase (flavodoxin)"/>
    <property type="match status" value="1"/>
</dbReference>
<dbReference type="Gene3D" id="3.20.20.20">
    <property type="entry name" value="Dihydropteroate synthase-like"/>
    <property type="match status" value="1"/>
</dbReference>
<dbReference type="Gene3D" id="3.30.413.10">
    <property type="entry name" value="Sulfite Reductase Hemoprotein, domain 1"/>
    <property type="match status" value="1"/>
</dbReference>
<dbReference type="HAMAP" id="MF_00159">
    <property type="entry name" value="IspG"/>
    <property type="match status" value="1"/>
</dbReference>
<dbReference type="InterPro" id="IPR011005">
    <property type="entry name" value="Dihydropteroate_synth-like_sf"/>
</dbReference>
<dbReference type="InterPro" id="IPR016425">
    <property type="entry name" value="IspG_bac"/>
</dbReference>
<dbReference type="InterPro" id="IPR004588">
    <property type="entry name" value="IspG_bac-typ"/>
</dbReference>
<dbReference type="InterPro" id="IPR045854">
    <property type="entry name" value="NO2/SO3_Rdtase_4Fe4S_sf"/>
</dbReference>
<dbReference type="NCBIfam" id="TIGR00612">
    <property type="entry name" value="ispG_gcpE"/>
    <property type="match status" value="1"/>
</dbReference>
<dbReference type="NCBIfam" id="NF001540">
    <property type="entry name" value="PRK00366.1"/>
    <property type="match status" value="1"/>
</dbReference>
<dbReference type="PANTHER" id="PTHR30454">
    <property type="entry name" value="4-HYDROXY-3-METHYLBUT-2-EN-1-YL DIPHOSPHATE SYNTHASE"/>
    <property type="match status" value="1"/>
</dbReference>
<dbReference type="PANTHER" id="PTHR30454:SF0">
    <property type="entry name" value="4-HYDROXY-3-METHYLBUT-2-EN-1-YL DIPHOSPHATE SYNTHASE (FERREDOXIN), CHLOROPLASTIC"/>
    <property type="match status" value="1"/>
</dbReference>
<dbReference type="Pfam" id="PF04551">
    <property type="entry name" value="GcpE"/>
    <property type="match status" value="1"/>
</dbReference>
<dbReference type="PIRSF" id="PIRSF004640">
    <property type="entry name" value="IspG"/>
    <property type="match status" value="1"/>
</dbReference>
<dbReference type="SUPFAM" id="SSF51717">
    <property type="entry name" value="Dihydropteroate synthetase-like"/>
    <property type="match status" value="1"/>
</dbReference>
<dbReference type="SUPFAM" id="SSF56014">
    <property type="entry name" value="Nitrite and sulphite reductase 4Fe-4S domain-like"/>
    <property type="match status" value="1"/>
</dbReference>
<evidence type="ECO:0000255" key="1">
    <source>
        <dbReference type="HAMAP-Rule" id="MF_00159"/>
    </source>
</evidence>
<protein>
    <recommendedName>
        <fullName evidence="1">4-hydroxy-3-methylbut-2-en-1-yl diphosphate synthase (flavodoxin)</fullName>
        <ecNumber evidence="1">1.17.7.3</ecNumber>
    </recommendedName>
    <alternativeName>
        <fullName evidence="1">1-hydroxy-2-methyl-2-(E)-butenyl 4-diphosphate synthase</fullName>
    </alternativeName>
</protein>
<gene>
    <name evidence="1" type="primary">ispG</name>
    <name type="ordered locus">Strop_1352</name>
</gene>
<keyword id="KW-0004">4Fe-4S</keyword>
<keyword id="KW-0408">Iron</keyword>
<keyword id="KW-0411">Iron-sulfur</keyword>
<keyword id="KW-0414">Isoprene biosynthesis</keyword>
<keyword id="KW-0479">Metal-binding</keyword>
<keyword id="KW-0560">Oxidoreductase</keyword>
<keyword id="KW-1185">Reference proteome</keyword>
<accession>A4X4L9</accession>
<comment type="function">
    <text evidence="1">Converts 2C-methyl-D-erythritol 2,4-cyclodiphosphate (ME-2,4cPP) into 1-hydroxy-2-methyl-2-(E)-butenyl 4-diphosphate.</text>
</comment>
<comment type="catalytic activity">
    <reaction evidence="1">
        <text>(2E)-4-hydroxy-3-methylbut-2-enyl diphosphate + oxidized [flavodoxin] + H2O + 2 H(+) = 2-C-methyl-D-erythritol 2,4-cyclic diphosphate + reduced [flavodoxin]</text>
        <dbReference type="Rhea" id="RHEA:43604"/>
        <dbReference type="Rhea" id="RHEA-COMP:10622"/>
        <dbReference type="Rhea" id="RHEA-COMP:10623"/>
        <dbReference type="ChEBI" id="CHEBI:15377"/>
        <dbReference type="ChEBI" id="CHEBI:15378"/>
        <dbReference type="ChEBI" id="CHEBI:57618"/>
        <dbReference type="ChEBI" id="CHEBI:58210"/>
        <dbReference type="ChEBI" id="CHEBI:58483"/>
        <dbReference type="ChEBI" id="CHEBI:128753"/>
        <dbReference type="EC" id="1.17.7.3"/>
    </reaction>
</comment>
<comment type="cofactor">
    <cofactor evidence="1">
        <name>[4Fe-4S] cluster</name>
        <dbReference type="ChEBI" id="CHEBI:49883"/>
    </cofactor>
    <text evidence="1">Binds 1 [4Fe-4S] cluster.</text>
</comment>
<comment type="pathway">
    <text evidence="1">Isoprenoid biosynthesis; isopentenyl diphosphate biosynthesis via DXP pathway; isopentenyl diphosphate from 1-deoxy-D-xylulose 5-phosphate: step 5/6.</text>
</comment>
<comment type="similarity">
    <text evidence="1">Belongs to the IspG family.</text>
</comment>
<organism>
    <name type="scientific">Salinispora tropica (strain ATCC BAA-916 / DSM 44818 / JCM 13857 / NBRC 105044 / CNB-440)</name>
    <dbReference type="NCBI Taxonomy" id="369723"/>
    <lineage>
        <taxon>Bacteria</taxon>
        <taxon>Bacillati</taxon>
        <taxon>Actinomycetota</taxon>
        <taxon>Actinomycetes</taxon>
        <taxon>Micromonosporales</taxon>
        <taxon>Micromonosporaceae</taxon>
        <taxon>Salinispora</taxon>
    </lineage>
</organism>
<proteinExistence type="inferred from homology"/>